<sequence>MKEKTPFKNEKEFHDMVKKTKKGTFSGWYIVNPENNSVEFSGNFNRQFKLNKPVIPVNTEYVTRKEFNEYKDSNDQRLIKIETTLAAQGEQIRIQGEQIKELQIEQKAQSETLKLILQTLQKMSDRLDKMDVRLDKLESK</sequence>
<evidence type="ECO:0000305" key="1"/>
<name>Y130_MYCPN</name>
<gene>
    <name type="ordered locus">MPN_130</name>
    <name type="ORF">C09_orf140o</name>
    <name type="ORF">MP024</name>
</gene>
<organism>
    <name type="scientific">Mycoplasma pneumoniae (strain ATCC 29342 / M129 / Subtype 1)</name>
    <name type="common">Mycoplasmoides pneumoniae</name>
    <dbReference type="NCBI Taxonomy" id="272634"/>
    <lineage>
        <taxon>Bacteria</taxon>
        <taxon>Bacillati</taxon>
        <taxon>Mycoplasmatota</taxon>
        <taxon>Mycoplasmoidales</taxon>
        <taxon>Mycoplasmoidaceae</taxon>
        <taxon>Mycoplasmoides</taxon>
    </lineage>
</organism>
<feature type="chain" id="PRO_0000221597" description="UPF0134 protein MPN_130">
    <location>
        <begin position="1"/>
        <end position="140"/>
    </location>
</feature>
<proteinExistence type="inferred from homology"/>
<comment type="similarity">
    <text evidence="1">Belongs to the UPF0134 family.</text>
</comment>
<dbReference type="EMBL" id="U00089">
    <property type="protein sequence ID" value="AAB95672.1"/>
    <property type="molecule type" value="Genomic_DNA"/>
</dbReference>
<dbReference type="PIR" id="S73350">
    <property type="entry name" value="S73350"/>
</dbReference>
<dbReference type="RefSeq" id="NP_109818.1">
    <property type="nucleotide sequence ID" value="NC_000912.1"/>
</dbReference>
<dbReference type="RefSeq" id="WP_010874487.1">
    <property type="nucleotide sequence ID" value="NZ_OU342337.1"/>
</dbReference>
<dbReference type="SMR" id="P75345"/>
<dbReference type="STRING" id="272634.MPN_130"/>
<dbReference type="EnsemblBacteria" id="AAB95672">
    <property type="protein sequence ID" value="AAB95672"/>
    <property type="gene ID" value="MPN_130"/>
</dbReference>
<dbReference type="KEGG" id="mpn:MPN_130"/>
<dbReference type="PATRIC" id="fig|272634.6.peg.141"/>
<dbReference type="HOGENOM" id="CLU_137918_0_0_14"/>
<dbReference type="BioCyc" id="MPNE272634:G1GJ3-218-MONOMER"/>
<dbReference type="Proteomes" id="UP000000808">
    <property type="component" value="Chromosome"/>
</dbReference>
<dbReference type="Gene3D" id="6.10.250.40">
    <property type="match status" value="1"/>
</dbReference>
<dbReference type="InterPro" id="IPR002862">
    <property type="entry name" value="DUF16"/>
</dbReference>
<dbReference type="Pfam" id="PF01519">
    <property type="entry name" value="DUF16"/>
    <property type="match status" value="1"/>
</dbReference>
<dbReference type="SUPFAM" id="SSF144266">
    <property type="entry name" value="MPN010-like"/>
    <property type="match status" value="1"/>
</dbReference>
<reference key="1">
    <citation type="journal article" date="1996" name="Nucleic Acids Res.">
        <title>Complete sequence analysis of the genome of the bacterium Mycoplasma pneumoniae.</title>
        <authorList>
            <person name="Himmelreich R."/>
            <person name="Hilbert H."/>
            <person name="Plagens H."/>
            <person name="Pirkl E."/>
            <person name="Li B.-C."/>
            <person name="Herrmann R."/>
        </authorList>
    </citation>
    <scope>NUCLEOTIDE SEQUENCE [LARGE SCALE GENOMIC DNA]</scope>
    <source>
        <strain>ATCC 29342 / M129 / Subtype 1</strain>
    </source>
</reference>
<accession>P75345</accession>
<keyword id="KW-1185">Reference proteome</keyword>
<protein>
    <recommendedName>
        <fullName>UPF0134 protein MPN_130</fullName>
    </recommendedName>
</protein>